<reference key="1">
    <citation type="journal article" date="2007" name="Nat. Biotechnol.">
        <title>Complete genome sequence of the fish pathogen Flavobacterium psychrophilum.</title>
        <authorList>
            <person name="Duchaud E."/>
            <person name="Boussaha M."/>
            <person name="Loux V."/>
            <person name="Bernardet J.-F."/>
            <person name="Michel C."/>
            <person name="Kerouault B."/>
            <person name="Mondot S."/>
            <person name="Nicolas P."/>
            <person name="Bossy R."/>
            <person name="Caron C."/>
            <person name="Bessieres P."/>
            <person name="Gibrat J.-F."/>
            <person name="Claverol S."/>
            <person name="Dumetz F."/>
            <person name="Le Henaff M."/>
            <person name="Benmansour A."/>
        </authorList>
    </citation>
    <scope>NUCLEOTIDE SEQUENCE [LARGE SCALE GENOMIC DNA]</scope>
    <source>
        <strain>ATCC 49511 / DSM 21280 / CIP 103535 / JIP02/86</strain>
    </source>
</reference>
<feature type="chain" id="PRO_1000017478" description="Large ribosomal subunit protein bL27">
    <location>
        <begin position="1"/>
        <end position="86"/>
    </location>
</feature>
<keyword id="KW-1185">Reference proteome</keyword>
<keyword id="KW-0687">Ribonucleoprotein</keyword>
<keyword id="KW-0689">Ribosomal protein</keyword>
<accession>A6H1P8</accession>
<dbReference type="EMBL" id="AM398681">
    <property type="protein sequence ID" value="CAL44272.1"/>
    <property type="molecule type" value="Genomic_DNA"/>
</dbReference>
<dbReference type="RefSeq" id="WP_011964306.1">
    <property type="nucleotide sequence ID" value="NC_009613.3"/>
</dbReference>
<dbReference type="RefSeq" id="YP_001297073.1">
    <property type="nucleotide sequence ID" value="NC_009613.3"/>
</dbReference>
<dbReference type="SMR" id="A6H1P8"/>
<dbReference type="STRING" id="402612.FP2216"/>
<dbReference type="EnsemblBacteria" id="CAL44272">
    <property type="protein sequence ID" value="CAL44272"/>
    <property type="gene ID" value="FP2216"/>
</dbReference>
<dbReference type="GeneID" id="66553320"/>
<dbReference type="KEGG" id="fps:FP2216"/>
<dbReference type="PATRIC" id="fig|402612.5.peg.2265"/>
<dbReference type="eggNOG" id="COG0211">
    <property type="taxonomic scope" value="Bacteria"/>
</dbReference>
<dbReference type="HOGENOM" id="CLU_095424_4_1_10"/>
<dbReference type="OrthoDB" id="9803474at2"/>
<dbReference type="Proteomes" id="UP000006394">
    <property type="component" value="Chromosome"/>
</dbReference>
<dbReference type="GO" id="GO:0022625">
    <property type="term" value="C:cytosolic large ribosomal subunit"/>
    <property type="evidence" value="ECO:0007669"/>
    <property type="project" value="TreeGrafter"/>
</dbReference>
<dbReference type="GO" id="GO:0003735">
    <property type="term" value="F:structural constituent of ribosome"/>
    <property type="evidence" value="ECO:0007669"/>
    <property type="project" value="InterPro"/>
</dbReference>
<dbReference type="GO" id="GO:0006412">
    <property type="term" value="P:translation"/>
    <property type="evidence" value="ECO:0007669"/>
    <property type="project" value="UniProtKB-UniRule"/>
</dbReference>
<dbReference type="FunFam" id="2.40.50.100:FF:000060">
    <property type="entry name" value="Apicoplast ribosomal protein L27"/>
    <property type="match status" value="1"/>
</dbReference>
<dbReference type="Gene3D" id="2.40.50.100">
    <property type="match status" value="1"/>
</dbReference>
<dbReference type="HAMAP" id="MF_00539">
    <property type="entry name" value="Ribosomal_bL27"/>
    <property type="match status" value="1"/>
</dbReference>
<dbReference type="InterPro" id="IPR001684">
    <property type="entry name" value="Ribosomal_bL27"/>
</dbReference>
<dbReference type="InterPro" id="IPR018261">
    <property type="entry name" value="Ribosomal_bL27_CS"/>
</dbReference>
<dbReference type="NCBIfam" id="TIGR00062">
    <property type="entry name" value="L27"/>
    <property type="match status" value="1"/>
</dbReference>
<dbReference type="PANTHER" id="PTHR15893:SF0">
    <property type="entry name" value="LARGE RIBOSOMAL SUBUNIT PROTEIN BL27M"/>
    <property type="match status" value="1"/>
</dbReference>
<dbReference type="PANTHER" id="PTHR15893">
    <property type="entry name" value="RIBOSOMAL PROTEIN L27"/>
    <property type="match status" value="1"/>
</dbReference>
<dbReference type="Pfam" id="PF01016">
    <property type="entry name" value="Ribosomal_L27"/>
    <property type="match status" value="1"/>
</dbReference>
<dbReference type="PRINTS" id="PR00063">
    <property type="entry name" value="RIBOSOMALL27"/>
</dbReference>
<dbReference type="SUPFAM" id="SSF110324">
    <property type="entry name" value="Ribosomal L27 protein-like"/>
    <property type="match status" value="1"/>
</dbReference>
<dbReference type="PROSITE" id="PS00831">
    <property type="entry name" value="RIBOSOMAL_L27"/>
    <property type="match status" value="1"/>
</dbReference>
<gene>
    <name evidence="1" type="primary">rpmA</name>
    <name type="ordered locus">FP2216</name>
</gene>
<evidence type="ECO:0000255" key="1">
    <source>
        <dbReference type="HAMAP-Rule" id="MF_00539"/>
    </source>
</evidence>
<evidence type="ECO:0000305" key="2"/>
<organism>
    <name type="scientific">Flavobacterium psychrophilum (strain ATCC 49511 / DSM 21280 / CIP 103535 / JIP02/86)</name>
    <dbReference type="NCBI Taxonomy" id="402612"/>
    <lineage>
        <taxon>Bacteria</taxon>
        <taxon>Pseudomonadati</taxon>
        <taxon>Bacteroidota</taxon>
        <taxon>Flavobacteriia</taxon>
        <taxon>Flavobacteriales</taxon>
        <taxon>Flavobacteriaceae</taxon>
        <taxon>Flavobacterium</taxon>
    </lineage>
</organism>
<name>RL27_FLAPJ</name>
<protein>
    <recommendedName>
        <fullName evidence="1">Large ribosomal subunit protein bL27</fullName>
    </recommendedName>
    <alternativeName>
        <fullName evidence="2">50S ribosomal protein L27</fullName>
    </alternativeName>
</protein>
<comment type="similarity">
    <text evidence="1">Belongs to the bacterial ribosomal protein bL27 family.</text>
</comment>
<sequence length="86" mass="9249">MAHKKGVGSSKNGRESESKRLGVKIFGGQAAIAGNIIVRQRGSKHNPGENVYMGKDHTLHARVAGLVKFQKKGENKSYVSVVAFEA</sequence>
<proteinExistence type="inferred from homology"/>